<evidence type="ECO:0000255" key="1">
    <source>
        <dbReference type="HAMAP-Rule" id="MF_00186"/>
    </source>
</evidence>
<dbReference type="EC" id="2.7.1.30" evidence="1"/>
<dbReference type="EMBL" id="AE009948">
    <property type="protein sequence ID" value="AAM99180.1"/>
    <property type="molecule type" value="Genomic_DNA"/>
</dbReference>
<dbReference type="RefSeq" id="NP_687308.1">
    <property type="nucleotide sequence ID" value="NC_004116.1"/>
</dbReference>
<dbReference type="RefSeq" id="WP_000093527.1">
    <property type="nucleotide sequence ID" value="NC_004116.1"/>
</dbReference>
<dbReference type="SMR" id="Q8E1T0"/>
<dbReference type="STRING" id="208435.SAG0273"/>
<dbReference type="KEGG" id="sag:SAG0273"/>
<dbReference type="PATRIC" id="fig|208435.3.peg.271"/>
<dbReference type="HOGENOM" id="CLU_009281_2_3_9"/>
<dbReference type="OrthoDB" id="9805576at2"/>
<dbReference type="UniPathway" id="UPA00618">
    <property type="reaction ID" value="UER00672"/>
</dbReference>
<dbReference type="Proteomes" id="UP000000821">
    <property type="component" value="Chromosome"/>
</dbReference>
<dbReference type="GO" id="GO:0005829">
    <property type="term" value="C:cytosol"/>
    <property type="evidence" value="ECO:0007669"/>
    <property type="project" value="TreeGrafter"/>
</dbReference>
<dbReference type="GO" id="GO:0005524">
    <property type="term" value="F:ATP binding"/>
    <property type="evidence" value="ECO:0007669"/>
    <property type="project" value="UniProtKB-UniRule"/>
</dbReference>
<dbReference type="GO" id="GO:0004370">
    <property type="term" value="F:glycerol kinase activity"/>
    <property type="evidence" value="ECO:0000250"/>
    <property type="project" value="UniProtKB"/>
</dbReference>
<dbReference type="GO" id="GO:0019563">
    <property type="term" value="P:glycerol catabolic process"/>
    <property type="evidence" value="ECO:0007669"/>
    <property type="project" value="UniProtKB-UniRule"/>
</dbReference>
<dbReference type="GO" id="GO:0006071">
    <property type="term" value="P:glycerol metabolic process"/>
    <property type="evidence" value="ECO:0000250"/>
    <property type="project" value="UniProtKB"/>
</dbReference>
<dbReference type="GO" id="GO:0006072">
    <property type="term" value="P:glycerol-3-phosphate metabolic process"/>
    <property type="evidence" value="ECO:0007669"/>
    <property type="project" value="InterPro"/>
</dbReference>
<dbReference type="CDD" id="cd07786">
    <property type="entry name" value="FGGY_EcGK_like"/>
    <property type="match status" value="1"/>
</dbReference>
<dbReference type="FunFam" id="3.30.420.40:FF:000007">
    <property type="entry name" value="Glycerol kinase"/>
    <property type="match status" value="1"/>
</dbReference>
<dbReference type="FunFam" id="3.30.420.40:FF:000008">
    <property type="entry name" value="Glycerol kinase"/>
    <property type="match status" value="1"/>
</dbReference>
<dbReference type="Gene3D" id="3.30.420.40">
    <property type="match status" value="2"/>
</dbReference>
<dbReference type="HAMAP" id="MF_00186">
    <property type="entry name" value="Glycerol_kin"/>
    <property type="match status" value="1"/>
</dbReference>
<dbReference type="InterPro" id="IPR043129">
    <property type="entry name" value="ATPase_NBD"/>
</dbReference>
<dbReference type="InterPro" id="IPR000577">
    <property type="entry name" value="Carb_kinase_FGGY"/>
</dbReference>
<dbReference type="InterPro" id="IPR018483">
    <property type="entry name" value="Carb_kinase_FGGY_CS"/>
</dbReference>
<dbReference type="InterPro" id="IPR018485">
    <property type="entry name" value="FGGY_C"/>
</dbReference>
<dbReference type="InterPro" id="IPR018484">
    <property type="entry name" value="FGGY_N"/>
</dbReference>
<dbReference type="InterPro" id="IPR005999">
    <property type="entry name" value="Glycerol_kin"/>
</dbReference>
<dbReference type="NCBIfam" id="TIGR01311">
    <property type="entry name" value="glycerol_kin"/>
    <property type="match status" value="1"/>
</dbReference>
<dbReference type="NCBIfam" id="NF000756">
    <property type="entry name" value="PRK00047.1"/>
    <property type="match status" value="1"/>
</dbReference>
<dbReference type="PANTHER" id="PTHR10196:SF69">
    <property type="entry name" value="GLYCEROL KINASE"/>
    <property type="match status" value="1"/>
</dbReference>
<dbReference type="PANTHER" id="PTHR10196">
    <property type="entry name" value="SUGAR KINASE"/>
    <property type="match status" value="1"/>
</dbReference>
<dbReference type="Pfam" id="PF02782">
    <property type="entry name" value="FGGY_C"/>
    <property type="match status" value="1"/>
</dbReference>
<dbReference type="Pfam" id="PF00370">
    <property type="entry name" value="FGGY_N"/>
    <property type="match status" value="1"/>
</dbReference>
<dbReference type="PIRSF" id="PIRSF000538">
    <property type="entry name" value="GlpK"/>
    <property type="match status" value="1"/>
</dbReference>
<dbReference type="SUPFAM" id="SSF53067">
    <property type="entry name" value="Actin-like ATPase domain"/>
    <property type="match status" value="2"/>
</dbReference>
<dbReference type="PROSITE" id="PS00933">
    <property type="entry name" value="FGGY_KINASES_1"/>
    <property type="match status" value="1"/>
</dbReference>
<dbReference type="PROSITE" id="PS00445">
    <property type="entry name" value="FGGY_KINASES_2"/>
    <property type="match status" value="1"/>
</dbReference>
<protein>
    <recommendedName>
        <fullName evidence="1">Glycerol kinase</fullName>
        <ecNumber evidence="1">2.7.1.30</ecNumber>
    </recommendedName>
    <alternativeName>
        <fullName evidence="1">ATP:glycerol 3-phosphotransferase</fullName>
    </alternativeName>
    <alternativeName>
        <fullName evidence="1">Glycerokinase</fullName>
        <shortName evidence="1">GK</shortName>
    </alternativeName>
</protein>
<organism>
    <name type="scientific">Streptococcus agalactiae serotype V (strain ATCC BAA-611 / 2603 V/R)</name>
    <dbReference type="NCBI Taxonomy" id="208435"/>
    <lineage>
        <taxon>Bacteria</taxon>
        <taxon>Bacillati</taxon>
        <taxon>Bacillota</taxon>
        <taxon>Bacilli</taxon>
        <taxon>Lactobacillales</taxon>
        <taxon>Streptococcaceae</taxon>
        <taxon>Streptococcus</taxon>
    </lineage>
</organism>
<comment type="function">
    <text evidence="1">Key enzyme in the regulation of glycerol uptake and metabolism. Catalyzes the phosphorylation of glycerol to yield sn-glycerol 3-phosphate.</text>
</comment>
<comment type="catalytic activity">
    <reaction evidence="1">
        <text>glycerol + ATP = sn-glycerol 3-phosphate + ADP + H(+)</text>
        <dbReference type="Rhea" id="RHEA:21644"/>
        <dbReference type="ChEBI" id="CHEBI:15378"/>
        <dbReference type="ChEBI" id="CHEBI:17754"/>
        <dbReference type="ChEBI" id="CHEBI:30616"/>
        <dbReference type="ChEBI" id="CHEBI:57597"/>
        <dbReference type="ChEBI" id="CHEBI:456216"/>
        <dbReference type="EC" id="2.7.1.30"/>
    </reaction>
</comment>
<comment type="activity regulation">
    <text evidence="1">Activated by phosphorylation and inhibited by fructose 1,6-bisphosphate (FBP).</text>
</comment>
<comment type="pathway">
    <text evidence="1">Polyol metabolism; glycerol degradation via glycerol kinase pathway; sn-glycerol 3-phosphate from glycerol: step 1/1.</text>
</comment>
<comment type="subunit">
    <text evidence="1">Homotetramer and homodimer (in equilibrium).</text>
</comment>
<comment type="PTM">
    <text evidence="1">The phosphoenolpyruvate-dependent sugar phosphotransferase system (PTS), including enzyme I, and histidine-containing protein (HPr) are required for the phosphorylation, which leads to the activation of the enzyme.</text>
</comment>
<comment type="similarity">
    <text evidence="1">Belongs to the FGGY kinase family.</text>
</comment>
<keyword id="KW-0067">ATP-binding</keyword>
<keyword id="KW-0319">Glycerol metabolism</keyword>
<keyword id="KW-0418">Kinase</keyword>
<keyword id="KW-0547">Nucleotide-binding</keyword>
<keyword id="KW-0597">Phosphoprotein</keyword>
<keyword id="KW-1185">Reference proteome</keyword>
<keyword id="KW-0808">Transferase</keyword>
<accession>Q8E1T0</accession>
<reference key="1">
    <citation type="journal article" date="2002" name="Proc. Natl. Acad. Sci. U.S.A.">
        <title>Complete genome sequence and comparative genomic analysis of an emerging human pathogen, serotype V Streptococcus agalactiae.</title>
        <authorList>
            <person name="Tettelin H."/>
            <person name="Masignani V."/>
            <person name="Cieslewicz M.J."/>
            <person name="Eisen J.A."/>
            <person name="Peterson S.N."/>
            <person name="Wessels M.R."/>
            <person name="Paulsen I.T."/>
            <person name="Nelson K.E."/>
            <person name="Margarit I."/>
            <person name="Read T.D."/>
            <person name="Madoff L.C."/>
            <person name="Wolf A.M."/>
            <person name="Beanan M.J."/>
            <person name="Brinkac L.M."/>
            <person name="Daugherty S.C."/>
            <person name="DeBoy R.T."/>
            <person name="Durkin A.S."/>
            <person name="Kolonay J.F."/>
            <person name="Madupu R."/>
            <person name="Lewis M.R."/>
            <person name="Radune D."/>
            <person name="Fedorova N.B."/>
            <person name="Scanlan D."/>
            <person name="Khouri H.M."/>
            <person name="Mulligan S."/>
            <person name="Carty H.A."/>
            <person name="Cline R.T."/>
            <person name="Van Aken S.E."/>
            <person name="Gill J."/>
            <person name="Scarselli M."/>
            <person name="Mora M."/>
            <person name="Iacobini E.T."/>
            <person name="Brettoni C."/>
            <person name="Galli G."/>
            <person name="Mariani M."/>
            <person name="Vegni F."/>
            <person name="Maione D."/>
            <person name="Rinaudo D."/>
            <person name="Rappuoli R."/>
            <person name="Telford J.L."/>
            <person name="Kasper D.L."/>
            <person name="Grandi G."/>
            <person name="Fraser C.M."/>
        </authorList>
    </citation>
    <scope>NUCLEOTIDE SEQUENCE [LARGE SCALE GENOMIC DNA]</scope>
    <source>
        <strain>ATCC BAA-611 / 2603 V/R</strain>
    </source>
</reference>
<feature type="chain" id="PRO_0000059498" description="Glycerol kinase">
    <location>
        <begin position="1"/>
        <end position="502"/>
    </location>
</feature>
<feature type="binding site" evidence="1">
    <location>
        <position position="15"/>
    </location>
    <ligand>
        <name>ADP</name>
        <dbReference type="ChEBI" id="CHEBI:456216"/>
    </ligand>
</feature>
<feature type="binding site" evidence="1">
    <location>
        <position position="15"/>
    </location>
    <ligand>
        <name>ATP</name>
        <dbReference type="ChEBI" id="CHEBI:30616"/>
    </ligand>
</feature>
<feature type="binding site" evidence="1">
    <location>
        <position position="15"/>
    </location>
    <ligand>
        <name>sn-glycerol 3-phosphate</name>
        <dbReference type="ChEBI" id="CHEBI:57597"/>
    </ligand>
</feature>
<feature type="binding site" evidence="1">
    <location>
        <position position="16"/>
    </location>
    <ligand>
        <name>ATP</name>
        <dbReference type="ChEBI" id="CHEBI:30616"/>
    </ligand>
</feature>
<feature type="binding site" evidence="1">
    <location>
        <position position="17"/>
    </location>
    <ligand>
        <name>ATP</name>
        <dbReference type="ChEBI" id="CHEBI:30616"/>
    </ligand>
</feature>
<feature type="binding site" evidence="1">
    <location>
        <position position="19"/>
    </location>
    <ligand>
        <name>ADP</name>
        <dbReference type="ChEBI" id="CHEBI:456216"/>
    </ligand>
</feature>
<feature type="binding site" evidence="1">
    <location>
        <position position="85"/>
    </location>
    <ligand>
        <name>glycerol</name>
        <dbReference type="ChEBI" id="CHEBI:17754"/>
    </ligand>
</feature>
<feature type="binding site" evidence="1">
    <location>
        <position position="85"/>
    </location>
    <ligand>
        <name>sn-glycerol 3-phosphate</name>
        <dbReference type="ChEBI" id="CHEBI:57597"/>
    </ligand>
</feature>
<feature type="binding site" evidence="1">
    <location>
        <position position="86"/>
    </location>
    <ligand>
        <name>glycerol</name>
        <dbReference type="ChEBI" id="CHEBI:17754"/>
    </ligand>
</feature>
<feature type="binding site" evidence="1">
    <location>
        <position position="86"/>
    </location>
    <ligand>
        <name>sn-glycerol 3-phosphate</name>
        <dbReference type="ChEBI" id="CHEBI:57597"/>
    </ligand>
</feature>
<feature type="binding site" evidence="1">
    <location>
        <position position="137"/>
    </location>
    <ligand>
        <name>glycerol</name>
        <dbReference type="ChEBI" id="CHEBI:17754"/>
    </ligand>
</feature>
<feature type="binding site" evidence="1">
    <location>
        <position position="137"/>
    </location>
    <ligand>
        <name>sn-glycerol 3-phosphate</name>
        <dbReference type="ChEBI" id="CHEBI:57597"/>
    </ligand>
</feature>
<feature type="binding site" evidence="1">
    <location>
        <position position="247"/>
    </location>
    <ligand>
        <name>glycerol</name>
        <dbReference type="ChEBI" id="CHEBI:17754"/>
    </ligand>
</feature>
<feature type="binding site" evidence="1">
    <location>
        <position position="247"/>
    </location>
    <ligand>
        <name>sn-glycerol 3-phosphate</name>
        <dbReference type="ChEBI" id="CHEBI:57597"/>
    </ligand>
</feature>
<feature type="binding site" evidence="1">
    <location>
        <position position="248"/>
    </location>
    <ligand>
        <name>glycerol</name>
        <dbReference type="ChEBI" id="CHEBI:17754"/>
    </ligand>
</feature>
<feature type="binding site" evidence="1">
    <location>
        <position position="269"/>
    </location>
    <ligand>
        <name>ADP</name>
        <dbReference type="ChEBI" id="CHEBI:456216"/>
    </ligand>
</feature>
<feature type="binding site" evidence="1">
    <location>
        <position position="269"/>
    </location>
    <ligand>
        <name>ATP</name>
        <dbReference type="ChEBI" id="CHEBI:30616"/>
    </ligand>
</feature>
<feature type="binding site" evidence="1">
    <location>
        <position position="312"/>
    </location>
    <ligand>
        <name>ADP</name>
        <dbReference type="ChEBI" id="CHEBI:456216"/>
    </ligand>
</feature>
<feature type="binding site" evidence="1">
    <location>
        <position position="312"/>
    </location>
    <ligand>
        <name>ATP</name>
        <dbReference type="ChEBI" id="CHEBI:30616"/>
    </ligand>
</feature>
<feature type="binding site" evidence="1">
    <location>
        <position position="316"/>
    </location>
    <ligand>
        <name>ATP</name>
        <dbReference type="ChEBI" id="CHEBI:30616"/>
    </ligand>
</feature>
<feature type="binding site" evidence="1">
    <location>
        <position position="413"/>
    </location>
    <ligand>
        <name>ADP</name>
        <dbReference type="ChEBI" id="CHEBI:456216"/>
    </ligand>
</feature>
<feature type="binding site" evidence="1">
    <location>
        <position position="413"/>
    </location>
    <ligand>
        <name>ATP</name>
        <dbReference type="ChEBI" id="CHEBI:30616"/>
    </ligand>
</feature>
<feature type="binding site" evidence="1">
    <location>
        <position position="417"/>
    </location>
    <ligand>
        <name>ADP</name>
        <dbReference type="ChEBI" id="CHEBI:456216"/>
    </ligand>
</feature>
<feature type="modified residue" description="Phosphohistidine; by HPr" evidence="1">
    <location>
        <position position="233"/>
    </location>
</feature>
<name>GLPK_STRA5</name>
<gene>
    <name evidence="1" type="primary">glpK</name>
    <name type="ordered locus">SAG0273</name>
</gene>
<sequence length="502" mass="55434">MSSEEKYIMAIDQGTTSSRAIIFNKKGEKIASSQKEFPQIFPQAGWVEHNANQIWNSVQSVIAGAFIESSIKPGQIEAIGITNQRETTVVWDKKTGLPIYNAIVWQSRQTAPIADQLKQEGHTNMIHEKTGLVIDAYFSATKVRWILDHVPGAQERAEKGELLFGTIDTWLVWKLTDGLVHVTDYSNAARTMLYNIKELKWDDEILELLNIPKAMLPEVKSNSEVYGKTTPFHFYGGEVPISGMAGDQQAALFGQLAFEPGMVKNTYGTGSFIIMNTGEEMQLSQNNLLTTIGYGINGKVHYALEGSIFIAGSAIQWLRDGLRMIETSSESEGLAQSSTSDDEVYVVPAFTGLGAPYWDSNARGSVFGLTRGTSKEDFVKATLQSIAYQVRDVIDTMQVDSGIDIQQLRVDGGAAMNNLLMQFQADILGIDIARAKNLETTALGAAFLAGLSVGYWESMDELKELNATGQLFQATMNESRKEKLYKGWRKAVKATQVFAQED</sequence>
<proteinExistence type="inferred from homology"/>